<organism>
    <name type="scientific">Shouchella clausii (strain KSM-K16)</name>
    <name type="common">Alkalihalobacillus clausii</name>
    <dbReference type="NCBI Taxonomy" id="66692"/>
    <lineage>
        <taxon>Bacteria</taxon>
        <taxon>Bacillati</taxon>
        <taxon>Bacillota</taxon>
        <taxon>Bacilli</taxon>
        <taxon>Bacillales</taxon>
        <taxon>Bacillaceae</taxon>
        <taxon>Shouchella</taxon>
    </lineage>
</organism>
<evidence type="ECO:0000255" key="1">
    <source>
        <dbReference type="HAMAP-Rule" id="MF_01159"/>
    </source>
</evidence>
<evidence type="ECO:0000256" key="2">
    <source>
        <dbReference type="SAM" id="MobiDB-lite"/>
    </source>
</evidence>
<evidence type="ECO:0000305" key="3"/>
<name>YABA_SHOC1</name>
<protein>
    <recommendedName>
        <fullName evidence="1">Replication initiation control protein YabA</fullName>
    </recommendedName>
</protein>
<reference key="1">
    <citation type="submission" date="2003-10" db="EMBL/GenBank/DDBJ databases">
        <title>The complete genome sequence of the alkaliphilic Bacillus clausii KSM-K16.</title>
        <authorList>
            <person name="Takaki Y."/>
            <person name="Kageyama Y."/>
            <person name="Shimamura S."/>
            <person name="Suzuki H."/>
            <person name="Nishi S."/>
            <person name="Hatada Y."/>
            <person name="Kawai S."/>
            <person name="Ito S."/>
            <person name="Horikoshi K."/>
        </authorList>
    </citation>
    <scope>NUCLEOTIDE SEQUENCE [LARGE SCALE GENOMIC DNA]</scope>
    <source>
        <strain>KSM-K16</strain>
    </source>
</reference>
<feature type="chain" id="PRO_0000211905" description="Replication initiation control protein YabA">
    <location>
        <begin position="1"/>
        <end position="116"/>
    </location>
</feature>
<feature type="region of interest" description="Disordered" evidence="2">
    <location>
        <begin position="52"/>
        <end position="73"/>
    </location>
</feature>
<feature type="compositionally biased region" description="Polar residues" evidence="2">
    <location>
        <begin position="58"/>
        <end position="67"/>
    </location>
</feature>
<feature type="binding site" evidence="1">
    <location>
        <position position="90"/>
    </location>
    <ligand>
        <name>Zn(2+)</name>
        <dbReference type="ChEBI" id="CHEBI:29105"/>
    </ligand>
</feature>
<feature type="binding site" evidence="1">
    <location>
        <position position="92"/>
    </location>
    <ligand>
        <name>Zn(2+)</name>
        <dbReference type="ChEBI" id="CHEBI:29105"/>
    </ligand>
</feature>
<feature type="binding site" evidence="1">
    <location>
        <position position="106"/>
    </location>
    <ligand>
        <name>Zn(2+)</name>
        <dbReference type="ChEBI" id="CHEBI:29105"/>
    </ligand>
</feature>
<feature type="binding site" evidence="1">
    <location>
        <position position="109"/>
    </location>
    <ligand>
        <name>Zn(2+)</name>
        <dbReference type="ChEBI" id="CHEBI:29105"/>
    </ligand>
</feature>
<dbReference type="EMBL" id="AP006627">
    <property type="protein sequence ID" value="BAD62597.1"/>
    <property type="status" value="ALT_INIT"/>
    <property type="molecule type" value="Genomic_DNA"/>
</dbReference>
<dbReference type="RefSeq" id="WP_035202192.1">
    <property type="nucleotide sequence ID" value="NC_006582.1"/>
</dbReference>
<dbReference type="SMR" id="Q5WLX8"/>
<dbReference type="STRING" id="66692.ABC0054"/>
<dbReference type="KEGG" id="bcl:ABC0054"/>
<dbReference type="eggNOG" id="COG4467">
    <property type="taxonomic scope" value="Bacteria"/>
</dbReference>
<dbReference type="HOGENOM" id="CLU_157169_0_0_9"/>
<dbReference type="OrthoDB" id="2112130at2"/>
<dbReference type="Proteomes" id="UP000001168">
    <property type="component" value="Chromosome"/>
</dbReference>
<dbReference type="GO" id="GO:0009295">
    <property type="term" value="C:nucleoid"/>
    <property type="evidence" value="ECO:0007669"/>
    <property type="project" value="UniProtKB-SubCell"/>
</dbReference>
<dbReference type="GO" id="GO:0006260">
    <property type="term" value="P:DNA replication"/>
    <property type="evidence" value="ECO:0007669"/>
    <property type="project" value="UniProtKB-UniRule"/>
</dbReference>
<dbReference type="HAMAP" id="MF_01159">
    <property type="entry name" value="YabA"/>
    <property type="match status" value="1"/>
</dbReference>
<dbReference type="InterPro" id="IPR010377">
    <property type="entry name" value="YabA"/>
</dbReference>
<dbReference type="NCBIfam" id="NF009644">
    <property type="entry name" value="PRK13169.1-5"/>
    <property type="match status" value="1"/>
</dbReference>
<dbReference type="Pfam" id="PF06156">
    <property type="entry name" value="YabA"/>
    <property type="match status" value="1"/>
</dbReference>
<dbReference type="PIRSF" id="PIRSF021439">
    <property type="entry name" value="DUF972"/>
    <property type="match status" value="1"/>
</dbReference>
<keyword id="KW-0963">Cytoplasm</keyword>
<keyword id="KW-0235">DNA replication</keyword>
<keyword id="KW-0236">DNA replication inhibitor</keyword>
<keyword id="KW-0479">Metal-binding</keyword>
<keyword id="KW-1185">Reference proteome</keyword>
<keyword id="KW-0862">Zinc</keyword>
<proteinExistence type="inferred from homology"/>
<sequence>MDKKAIFTQVSSLEERIGDLHDELRGLKEQLAYLIEENHYLHVENENLRKRLEPEAGTKNTVTPSGESSRKKMVGEGHENLARLYQEGFHICNTHYGSIRPEGDDCLFCLSFLHQK</sequence>
<gene>
    <name evidence="1" type="primary">yabA</name>
    <name type="ordered locus">ABC0054</name>
</gene>
<accession>Q5WLX8</accession>
<comment type="function">
    <text evidence="1">Involved in control of chromosome replication initiation. Inhibits the cooperative binding of DnaA to the oriC region, thus negatively regulating initiation of chromosome replication. Inhibits the ability of DnaA-ATP to form a helix on DNA; does not disassemble preformed DnaA-DNA helices. Decreases the residence time of DnaA on the chromosome at its binding sites (oriC, replication forks and promoter-binding sites). Tethers DnaA to the replication machinery via the DNA polymerase beta sliding clamp subunit (dnaN). Associates with oriC and other DnaA targets on the chromosome in a DnaA-dependent manner.</text>
</comment>
<comment type="cofactor">
    <cofactor evidence="1">
        <name>Zn(2+)</name>
        <dbReference type="ChEBI" id="CHEBI:29105"/>
    </cofactor>
    <text evidence="1">Binds 1 zinc ion per subunit.</text>
</comment>
<comment type="subunit">
    <text evidence="1">Homotetramer. Interacts with both DnaA and DnaN, acting as a bridge between these two proteins.</text>
</comment>
<comment type="subcellular location">
    <subcellularLocation>
        <location evidence="1">Cytoplasm</location>
        <location evidence="1">Nucleoid</location>
    </subcellularLocation>
    <text evidence="1">Localizes in tight foci, which correspond to the replisome at mid-cell throughout the cell cycle.</text>
</comment>
<comment type="similarity">
    <text evidence="1">Belongs to the YabA family.</text>
</comment>
<comment type="sequence caution" evidence="3">
    <conflict type="erroneous initiation">
        <sequence resource="EMBL-CDS" id="BAD62597"/>
    </conflict>
</comment>